<comment type="function">
    <text evidence="1">Specifically methylates the cytosine at position 967 (m5C967) of 16S rRNA.</text>
</comment>
<comment type="catalytic activity">
    <reaction evidence="1">
        <text>cytidine(967) in 16S rRNA + S-adenosyl-L-methionine = 5-methylcytidine(967) in 16S rRNA + S-adenosyl-L-homocysteine + H(+)</text>
        <dbReference type="Rhea" id="RHEA:42748"/>
        <dbReference type="Rhea" id="RHEA-COMP:10219"/>
        <dbReference type="Rhea" id="RHEA-COMP:10220"/>
        <dbReference type="ChEBI" id="CHEBI:15378"/>
        <dbReference type="ChEBI" id="CHEBI:57856"/>
        <dbReference type="ChEBI" id="CHEBI:59789"/>
        <dbReference type="ChEBI" id="CHEBI:74483"/>
        <dbReference type="ChEBI" id="CHEBI:82748"/>
        <dbReference type="EC" id="2.1.1.176"/>
    </reaction>
</comment>
<comment type="subcellular location">
    <subcellularLocation>
        <location evidence="1">Cytoplasm</location>
    </subcellularLocation>
</comment>
<comment type="similarity">
    <text evidence="1">Belongs to the class I-like SAM-binding methyltransferase superfamily. RsmB/NOP family.</text>
</comment>
<gene>
    <name evidence="1" type="primary">rsmB</name>
    <name evidence="1" type="synonym">sun</name>
    <name type="ordered locus">EC55989_3705</name>
</gene>
<protein>
    <recommendedName>
        <fullName evidence="1">Ribosomal RNA small subunit methyltransferase B</fullName>
        <ecNumber evidence="1">2.1.1.176</ecNumber>
    </recommendedName>
    <alternativeName>
        <fullName evidence="1">16S rRNA m5C967 methyltransferase</fullName>
    </alternativeName>
    <alternativeName>
        <fullName evidence="1">rRNA (cytosine-C(5)-)-methyltransferase RsmB</fullName>
    </alternativeName>
</protein>
<reference key="1">
    <citation type="journal article" date="2009" name="PLoS Genet.">
        <title>Organised genome dynamics in the Escherichia coli species results in highly diverse adaptive paths.</title>
        <authorList>
            <person name="Touchon M."/>
            <person name="Hoede C."/>
            <person name="Tenaillon O."/>
            <person name="Barbe V."/>
            <person name="Baeriswyl S."/>
            <person name="Bidet P."/>
            <person name="Bingen E."/>
            <person name="Bonacorsi S."/>
            <person name="Bouchier C."/>
            <person name="Bouvet O."/>
            <person name="Calteau A."/>
            <person name="Chiapello H."/>
            <person name="Clermont O."/>
            <person name="Cruveiller S."/>
            <person name="Danchin A."/>
            <person name="Diard M."/>
            <person name="Dossat C."/>
            <person name="Karoui M.E."/>
            <person name="Frapy E."/>
            <person name="Garry L."/>
            <person name="Ghigo J.M."/>
            <person name="Gilles A.M."/>
            <person name="Johnson J."/>
            <person name="Le Bouguenec C."/>
            <person name="Lescat M."/>
            <person name="Mangenot S."/>
            <person name="Martinez-Jehanne V."/>
            <person name="Matic I."/>
            <person name="Nassif X."/>
            <person name="Oztas S."/>
            <person name="Petit M.A."/>
            <person name="Pichon C."/>
            <person name="Rouy Z."/>
            <person name="Ruf C.S."/>
            <person name="Schneider D."/>
            <person name="Tourret J."/>
            <person name="Vacherie B."/>
            <person name="Vallenet D."/>
            <person name="Medigue C."/>
            <person name="Rocha E.P.C."/>
            <person name="Denamur E."/>
        </authorList>
    </citation>
    <scope>NUCLEOTIDE SEQUENCE [LARGE SCALE GENOMIC DNA]</scope>
    <source>
        <strain>55989 / EAEC</strain>
    </source>
</reference>
<name>RSMB_ECO55</name>
<evidence type="ECO:0000255" key="1">
    <source>
        <dbReference type="HAMAP-Rule" id="MF_01856"/>
    </source>
</evidence>
<sequence length="429" mass="48319">MKKQRNLRSMAAQAVEQVVEQGQSLSNILPPLQQKVSDKDKALLQELCFGVLRTLSQLDWLINKLMARPMTGKQRTVHYLIMVGLYQLLYTRIPPHAALAETVEGAIAIKRPQLKGLINGVLRQFQRQQEELLAEFNASDARYLHPSWLLKRLQKAYPEQWQSIVEANNQRPPMWLRVNRTHHSRDSWLALLDEAGMKGFPHADYPDAVRLETPAPVHALPGFEDGWVTVQDASAQGCMTWLAPQNGEHILDLCAAPGGKTTHILEVAPEAQVVAVDIDEQRLSRVYDNLKRLGMKATVKQGDGRYPSQWCGEQQFDRILLDAPCSATGVIRRHPDIKWLRRDRDIPELAQLQSEILDAIWPHLKSGGTLVYATCSVLPEENSLQIKAFLQRTADAELCETGTPEQPGKQNLPGAEEGDGFFYAKLIKK</sequence>
<accession>B7LHZ0</accession>
<keyword id="KW-0963">Cytoplasm</keyword>
<keyword id="KW-0489">Methyltransferase</keyword>
<keyword id="KW-1185">Reference proteome</keyword>
<keyword id="KW-0694">RNA-binding</keyword>
<keyword id="KW-0698">rRNA processing</keyword>
<keyword id="KW-0949">S-adenosyl-L-methionine</keyword>
<keyword id="KW-0808">Transferase</keyword>
<dbReference type="EC" id="2.1.1.176" evidence="1"/>
<dbReference type="EMBL" id="CU928145">
    <property type="protein sequence ID" value="CAU99984.1"/>
    <property type="molecule type" value="Genomic_DNA"/>
</dbReference>
<dbReference type="RefSeq" id="WP_000744779.1">
    <property type="nucleotide sequence ID" value="NC_011748.1"/>
</dbReference>
<dbReference type="SMR" id="B7LHZ0"/>
<dbReference type="GeneID" id="75204129"/>
<dbReference type="KEGG" id="eck:EC55989_3705"/>
<dbReference type="HOGENOM" id="CLU_005316_0_4_6"/>
<dbReference type="Proteomes" id="UP000000746">
    <property type="component" value="Chromosome"/>
</dbReference>
<dbReference type="GO" id="GO:0005829">
    <property type="term" value="C:cytosol"/>
    <property type="evidence" value="ECO:0007669"/>
    <property type="project" value="TreeGrafter"/>
</dbReference>
<dbReference type="GO" id="GO:0003723">
    <property type="term" value="F:RNA binding"/>
    <property type="evidence" value="ECO:0007669"/>
    <property type="project" value="UniProtKB-KW"/>
</dbReference>
<dbReference type="GO" id="GO:0009383">
    <property type="term" value="F:rRNA (cytosine-C5-)-methyltransferase activity"/>
    <property type="evidence" value="ECO:0007669"/>
    <property type="project" value="TreeGrafter"/>
</dbReference>
<dbReference type="GO" id="GO:0006355">
    <property type="term" value="P:regulation of DNA-templated transcription"/>
    <property type="evidence" value="ECO:0007669"/>
    <property type="project" value="InterPro"/>
</dbReference>
<dbReference type="GO" id="GO:0070475">
    <property type="term" value="P:rRNA base methylation"/>
    <property type="evidence" value="ECO:0007669"/>
    <property type="project" value="TreeGrafter"/>
</dbReference>
<dbReference type="CDD" id="cd02440">
    <property type="entry name" value="AdoMet_MTases"/>
    <property type="match status" value="1"/>
</dbReference>
<dbReference type="CDD" id="cd00620">
    <property type="entry name" value="Methyltransferase_Sun"/>
    <property type="match status" value="1"/>
</dbReference>
<dbReference type="FunFam" id="1.10.287.730:FF:000001">
    <property type="entry name" value="Ribosomal RNA small subunit methyltransferase B"/>
    <property type="match status" value="1"/>
</dbReference>
<dbReference type="FunFam" id="1.10.940.10:FF:000002">
    <property type="entry name" value="Ribosomal RNA small subunit methyltransferase B"/>
    <property type="match status" value="1"/>
</dbReference>
<dbReference type="FunFam" id="3.30.70.1170:FF:000002">
    <property type="entry name" value="Ribosomal RNA small subunit methyltransferase B"/>
    <property type="match status" value="1"/>
</dbReference>
<dbReference type="FunFam" id="3.40.50.150:FF:000022">
    <property type="entry name" value="Ribosomal RNA small subunit methyltransferase B"/>
    <property type="match status" value="1"/>
</dbReference>
<dbReference type="Gene3D" id="1.10.287.730">
    <property type="entry name" value="Helix hairpin bin"/>
    <property type="match status" value="1"/>
</dbReference>
<dbReference type="Gene3D" id="1.10.940.10">
    <property type="entry name" value="NusB-like"/>
    <property type="match status" value="1"/>
</dbReference>
<dbReference type="Gene3D" id="3.30.70.1170">
    <property type="entry name" value="Sun protein, domain 3"/>
    <property type="match status" value="1"/>
</dbReference>
<dbReference type="Gene3D" id="3.40.50.150">
    <property type="entry name" value="Vaccinia Virus protein VP39"/>
    <property type="match status" value="1"/>
</dbReference>
<dbReference type="HAMAP" id="MF_01856">
    <property type="entry name" value="16SrRNA_methyltr_B"/>
    <property type="match status" value="1"/>
</dbReference>
<dbReference type="InterPro" id="IPR049560">
    <property type="entry name" value="MeTrfase_RsmB-F_NOP2_cat"/>
</dbReference>
<dbReference type="InterPro" id="IPR001678">
    <property type="entry name" value="MeTrfase_RsmB-F_NOP2_dom"/>
</dbReference>
<dbReference type="InterPro" id="IPR035926">
    <property type="entry name" value="NusB-like_sf"/>
</dbReference>
<dbReference type="InterPro" id="IPR006027">
    <property type="entry name" value="NusB_RsmB_TIM44"/>
</dbReference>
<dbReference type="InterPro" id="IPR023267">
    <property type="entry name" value="RCMT"/>
</dbReference>
<dbReference type="InterPro" id="IPR004573">
    <property type="entry name" value="rRNA_ssu_MeTfrase_B"/>
</dbReference>
<dbReference type="InterPro" id="IPR023541">
    <property type="entry name" value="rRNA_ssu_MeTfrase_B_ent"/>
</dbReference>
<dbReference type="InterPro" id="IPR054728">
    <property type="entry name" value="RsmB-like_ferredoxin"/>
</dbReference>
<dbReference type="InterPro" id="IPR048019">
    <property type="entry name" value="RsmB-like_N"/>
</dbReference>
<dbReference type="InterPro" id="IPR018314">
    <property type="entry name" value="RsmB/NOL1/NOP2-like_CS"/>
</dbReference>
<dbReference type="InterPro" id="IPR029063">
    <property type="entry name" value="SAM-dependent_MTases_sf"/>
</dbReference>
<dbReference type="NCBIfam" id="NF008149">
    <property type="entry name" value="PRK10901.1"/>
    <property type="match status" value="1"/>
</dbReference>
<dbReference type="NCBIfam" id="NF011494">
    <property type="entry name" value="PRK14902.1"/>
    <property type="match status" value="1"/>
</dbReference>
<dbReference type="NCBIfam" id="TIGR00563">
    <property type="entry name" value="rsmB"/>
    <property type="match status" value="1"/>
</dbReference>
<dbReference type="PANTHER" id="PTHR22807:SF61">
    <property type="entry name" value="NOL1_NOP2_SUN FAMILY PROTEIN _ ANTITERMINATION NUSB DOMAIN-CONTAINING PROTEIN"/>
    <property type="match status" value="1"/>
</dbReference>
<dbReference type="PANTHER" id="PTHR22807">
    <property type="entry name" value="NOP2 YEAST -RELATED NOL1/NOP2/FMU SUN DOMAIN-CONTAINING"/>
    <property type="match status" value="1"/>
</dbReference>
<dbReference type="Pfam" id="PF01189">
    <property type="entry name" value="Methyltr_RsmB-F"/>
    <property type="match status" value="1"/>
</dbReference>
<dbReference type="Pfam" id="PF01029">
    <property type="entry name" value="NusB"/>
    <property type="match status" value="1"/>
</dbReference>
<dbReference type="Pfam" id="PF22458">
    <property type="entry name" value="RsmF-B_ferredox"/>
    <property type="match status" value="1"/>
</dbReference>
<dbReference type="PRINTS" id="PR02008">
    <property type="entry name" value="RCMTFAMILY"/>
</dbReference>
<dbReference type="SUPFAM" id="SSF48013">
    <property type="entry name" value="NusB-like"/>
    <property type="match status" value="1"/>
</dbReference>
<dbReference type="SUPFAM" id="SSF53335">
    <property type="entry name" value="S-adenosyl-L-methionine-dependent methyltransferases"/>
    <property type="match status" value="1"/>
</dbReference>
<dbReference type="PROSITE" id="PS01153">
    <property type="entry name" value="NOL1_NOP2_SUN"/>
    <property type="match status" value="1"/>
</dbReference>
<dbReference type="PROSITE" id="PS51686">
    <property type="entry name" value="SAM_MT_RSMB_NOP"/>
    <property type="match status" value="1"/>
</dbReference>
<organism>
    <name type="scientific">Escherichia coli (strain 55989 / EAEC)</name>
    <dbReference type="NCBI Taxonomy" id="585055"/>
    <lineage>
        <taxon>Bacteria</taxon>
        <taxon>Pseudomonadati</taxon>
        <taxon>Pseudomonadota</taxon>
        <taxon>Gammaproteobacteria</taxon>
        <taxon>Enterobacterales</taxon>
        <taxon>Enterobacteriaceae</taxon>
        <taxon>Escherichia</taxon>
    </lineage>
</organism>
<proteinExistence type="inferred from homology"/>
<feature type="chain" id="PRO_1000188690" description="Ribosomal RNA small subunit methyltransferase B">
    <location>
        <begin position="1"/>
        <end position="429"/>
    </location>
</feature>
<feature type="active site" description="Nucleophile" evidence="1">
    <location>
        <position position="375"/>
    </location>
</feature>
<feature type="binding site" evidence="1">
    <location>
        <begin position="254"/>
        <end position="260"/>
    </location>
    <ligand>
        <name>S-adenosyl-L-methionine</name>
        <dbReference type="ChEBI" id="CHEBI:59789"/>
    </ligand>
</feature>
<feature type="binding site" evidence="1">
    <location>
        <position position="277"/>
    </location>
    <ligand>
        <name>S-adenosyl-L-methionine</name>
        <dbReference type="ChEBI" id="CHEBI:59789"/>
    </ligand>
</feature>
<feature type="binding site" evidence="1">
    <location>
        <position position="303"/>
    </location>
    <ligand>
        <name>S-adenosyl-L-methionine</name>
        <dbReference type="ChEBI" id="CHEBI:59789"/>
    </ligand>
</feature>
<feature type="binding site" evidence="1">
    <location>
        <position position="322"/>
    </location>
    <ligand>
        <name>S-adenosyl-L-methionine</name>
        <dbReference type="ChEBI" id="CHEBI:59789"/>
    </ligand>
</feature>